<dbReference type="EMBL" id="X17403">
    <property type="protein sequence ID" value="CAA35456.1"/>
    <property type="molecule type" value="Genomic_DNA"/>
</dbReference>
<dbReference type="EMBL" id="X17403">
    <property type="protein sequence ID" value="CAA35302.1"/>
    <property type="molecule type" value="Genomic_DNA"/>
</dbReference>
<dbReference type="PIR" id="S09757">
    <property type="entry name" value="S09757"/>
</dbReference>
<dbReference type="Proteomes" id="UP000008991">
    <property type="component" value="Segment"/>
</dbReference>
<feature type="chain" id="PRO_0000115256" description="Uncharacterized protein IRL8">
    <location>
        <begin position="1"/>
        <end position="129"/>
    </location>
</feature>
<feature type="region of interest" description="Disordered" evidence="1">
    <location>
        <begin position="1"/>
        <end position="57"/>
    </location>
</feature>
<feature type="region of interest" description="Disordered" evidence="1">
    <location>
        <begin position="87"/>
        <end position="129"/>
    </location>
</feature>
<feature type="compositionally biased region" description="Basic and acidic residues" evidence="1">
    <location>
        <begin position="10"/>
        <end position="20"/>
    </location>
</feature>
<feature type="compositionally biased region" description="Low complexity" evidence="1">
    <location>
        <begin position="87"/>
        <end position="99"/>
    </location>
</feature>
<organismHost>
    <name type="scientific">Homo sapiens</name>
    <name type="common">Human</name>
    <dbReference type="NCBI Taxonomy" id="9606"/>
</organismHost>
<name>IR08_HCMVA</name>
<proteinExistence type="predicted"/>
<reference key="1">
    <citation type="journal article" date="1990" name="Curr. Top. Microbiol. Immunol.">
        <title>Analysis of the protein-coding content of the sequence of human cytomegalovirus strain AD169.</title>
        <authorList>
            <person name="Chee M.S."/>
            <person name="Bankier A.T."/>
            <person name="Beck S."/>
            <person name="Bohni R."/>
            <person name="Brown C.M."/>
            <person name="Cerny R."/>
            <person name="Horsnell T."/>
            <person name="Hutchison C.A. III"/>
            <person name="Kouzarides T."/>
            <person name="Martignetti J.A."/>
            <person name="Preddie E."/>
            <person name="Satchwell S.C."/>
            <person name="Tomlinson P."/>
            <person name="Weston K.M."/>
            <person name="Barrell B.G."/>
        </authorList>
    </citation>
    <scope>NUCLEOTIDE SEQUENCE [LARGE SCALE GENOMIC DNA]</scope>
</reference>
<accession>P16806</accession>
<organism>
    <name type="scientific">Human cytomegalovirus (strain AD169)</name>
    <name type="common">HHV-5</name>
    <name type="synonym">Human herpesvirus 5</name>
    <dbReference type="NCBI Taxonomy" id="10360"/>
    <lineage>
        <taxon>Viruses</taxon>
        <taxon>Duplodnaviria</taxon>
        <taxon>Heunggongvirae</taxon>
        <taxon>Peploviricota</taxon>
        <taxon>Herviviricetes</taxon>
        <taxon>Herpesvirales</taxon>
        <taxon>Orthoherpesviridae</taxon>
        <taxon>Betaherpesvirinae</taxon>
        <taxon>Cytomegalovirus</taxon>
        <taxon>Cytomegalovirus humanbeta5</taxon>
        <taxon>Human cytomegalovirus</taxon>
    </lineage>
</organism>
<protein>
    <recommendedName>
        <fullName>Uncharacterized protein IRL8</fullName>
        <shortName>TRL8</shortName>
    </recommendedName>
</protein>
<evidence type="ECO:0000256" key="1">
    <source>
        <dbReference type="SAM" id="MobiDB-lite"/>
    </source>
</evidence>
<sequence length="129" mass="14302">MGGGGNGRGSGEERREKRSGASEGEDGMVSPERPAFMEHSRPVGYHPQEDESQLPNHLETRVTVYRSHASQLKTADSPTLFLLWLSPVSSSPSRSPSSSEEYHPLSCGSRSASTNETRRRLSTADWLWW</sequence>